<organism>
    <name type="scientific">Chromobacterium violaceum (strain ATCC 12472 / DSM 30191 / JCM 1249 / CCUG 213 / NBRC 12614 / NCIMB 9131 / NCTC 9757 / MK)</name>
    <dbReference type="NCBI Taxonomy" id="243365"/>
    <lineage>
        <taxon>Bacteria</taxon>
        <taxon>Pseudomonadati</taxon>
        <taxon>Pseudomonadota</taxon>
        <taxon>Betaproteobacteria</taxon>
        <taxon>Neisseriales</taxon>
        <taxon>Chromobacteriaceae</taxon>
        <taxon>Chromobacterium</taxon>
    </lineage>
</organism>
<name>Y3079_CHRVO</name>
<sequence length="224" mass="24808">MSIASWPESERPREKLLSQGAATLNDSELLAIFLRTGIKGVNAVELARRLLQEFGSLSALLAAPLPAFKAKPGLGEAKYAQLMACTELARRALSEQMRLGDALSSPQQVRDYLRLSIGRREVETFVVIFLSAQNRLIEVEEVFKGTLTETRVYPREVLRRALRHNAAALIIAHNHPSGVSEPSSADRVLTDTLKRALELVDIRLLDHFVVTGGHAESFAERGWL</sequence>
<protein>
    <recommendedName>
        <fullName>UPF0758 protein CV_3079</fullName>
    </recommendedName>
</protein>
<feature type="chain" id="PRO_1000001648" description="UPF0758 protein CV_3079">
    <location>
        <begin position="1"/>
        <end position="224"/>
    </location>
</feature>
<feature type="domain" description="MPN" evidence="1">
    <location>
        <begin position="102"/>
        <end position="224"/>
    </location>
</feature>
<feature type="short sequence motif" description="JAMM motif" evidence="1">
    <location>
        <begin position="173"/>
        <end position="186"/>
    </location>
</feature>
<feature type="binding site" evidence="1">
    <location>
        <position position="173"/>
    </location>
    <ligand>
        <name>Zn(2+)</name>
        <dbReference type="ChEBI" id="CHEBI:29105"/>
        <note>catalytic</note>
    </ligand>
</feature>
<feature type="binding site" evidence="1">
    <location>
        <position position="175"/>
    </location>
    <ligand>
        <name>Zn(2+)</name>
        <dbReference type="ChEBI" id="CHEBI:29105"/>
        <note>catalytic</note>
    </ligand>
</feature>
<feature type="binding site" evidence="1">
    <location>
        <position position="186"/>
    </location>
    <ligand>
        <name>Zn(2+)</name>
        <dbReference type="ChEBI" id="CHEBI:29105"/>
        <note>catalytic</note>
    </ligand>
</feature>
<comment type="similarity">
    <text evidence="2">Belongs to the UPF0758 family.</text>
</comment>
<reference key="1">
    <citation type="journal article" date="2003" name="Proc. Natl. Acad. Sci. U.S.A.">
        <title>The complete genome sequence of Chromobacterium violaceum reveals remarkable and exploitable bacterial adaptability.</title>
        <authorList>
            <person name="Vasconcelos A.T.R."/>
            <person name="de Almeida D.F."/>
            <person name="Hungria M."/>
            <person name="Guimaraes C.T."/>
            <person name="Antonio R.V."/>
            <person name="Almeida F.C."/>
            <person name="de Almeida L.G.P."/>
            <person name="de Almeida R."/>
            <person name="Alves-Gomes J.A."/>
            <person name="Andrade E.M."/>
            <person name="Araripe J."/>
            <person name="de Araujo M.F.F."/>
            <person name="Astolfi-Filho S."/>
            <person name="Azevedo V."/>
            <person name="Baptista A.J."/>
            <person name="Bataus L.A.M."/>
            <person name="Batista J.S."/>
            <person name="Belo A."/>
            <person name="van den Berg C."/>
            <person name="Bogo M."/>
            <person name="Bonatto S."/>
            <person name="Bordignon J."/>
            <person name="Brigido M.M."/>
            <person name="Brito C.A."/>
            <person name="Brocchi M."/>
            <person name="Burity H.A."/>
            <person name="Camargo A.A."/>
            <person name="Cardoso D.D.P."/>
            <person name="Carneiro N.P."/>
            <person name="Carraro D.M."/>
            <person name="Carvalho C.M.B."/>
            <person name="Cascardo J.C.M."/>
            <person name="Cavada B.S."/>
            <person name="Chueire L.M.O."/>
            <person name="Creczynski-Pasa T.B."/>
            <person name="Cunha-Junior N.C."/>
            <person name="Fagundes N."/>
            <person name="Falcao C.L."/>
            <person name="Fantinatti F."/>
            <person name="Farias I.P."/>
            <person name="Felipe M.S.S."/>
            <person name="Ferrari L.P."/>
            <person name="Ferro J.A."/>
            <person name="Ferro M.I.T."/>
            <person name="Franco G.R."/>
            <person name="Freitas N.S.A."/>
            <person name="Furlan L.R."/>
            <person name="Gazzinelli R.T."/>
            <person name="Gomes E.A."/>
            <person name="Goncalves P.R."/>
            <person name="Grangeiro T.B."/>
            <person name="Grattapaglia D."/>
            <person name="Grisard E.C."/>
            <person name="Hanna E.S."/>
            <person name="Jardim S.N."/>
            <person name="Laurino J."/>
            <person name="Leoi L.C.T."/>
            <person name="Lima L.F.A."/>
            <person name="Loureiro M.F."/>
            <person name="Lyra M.C.C.P."/>
            <person name="Madeira H.M.F."/>
            <person name="Manfio G.P."/>
            <person name="Maranhao A.Q."/>
            <person name="Martins W.S."/>
            <person name="di Mauro S.M.Z."/>
            <person name="de Medeiros S.R.B."/>
            <person name="Meissner R.V."/>
            <person name="Moreira M.A.M."/>
            <person name="Nascimento F.F."/>
            <person name="Nicolas M.F."/>
            <person name="Oliveira J.G."/>
            <person name="Oliveira S.C."/>
            <person name="Paixao R.F.C."/>
            <person name="Parente J.A."/>
            <person name="Pedrosa F.O."/>
            <person name="Pena S.D.J."/>
            <person name="Pereira J.O."/>
            <person name="Pereira M."/>
            <person name="Pinto L.S.R.C."/>
            <person name="Pinto L.S."/>
            <person name="Porto J.I.R."/>
            <person name="Potrich D.P."/>
            <person name="Ramalho-Neto C.E."/>
            <person name="Reis A.M.M."/>
            <person name="Rigo L.U."/>
            <person name="Rondinelli E."/>
            <person name="Santos E.B.P."/>
            <person name="Santos F.R."/>
            <person name="Schneider M.P.C."/>
            <person name="Seuanez H.N."/>
            <person name="Silva A.M.R."/>
            <person name="da Silva A.L.C."/>
            <person name="Silva D.W."/>
            <person name="Silva R."/>
            <person name="Simoes I.C."/>
            <person name="Simon D."/>
            <person name="Soares C.M.A."/>
            <person name="Soares R.B.A."/>
            <person name="Souza E.M."/>
            <person name="Souza K.R.L."/>
            <person name="Souza R.C."/>
            <person name="Steffens M.B.R."/>
            <person name="Steindel M."/>
            <person name="Teixeira S.R."/>
            <person name="Urmenyi T."/>
            <person name="Vettore A."/>
            <person name="Wassem R."/>
            <person name="Zaha A."/>
            <person name="Simpson A.J.G."/>
        </authorList>
    </citation>
    <scope>NUCLEOTIDE SEQUENCE [LARGE SCALE GENOMIC DNA]</scope>
    <source>
        <strain>ATCC 12472 / DSM 30191 / JCM 1249 / CCUG 213 / NBRC 12614 / NCIMB 9131 / NCTC 9757 / MK</strain>
    </source>
</reference>
<evidence type="ECO:0000255" key="1">
    <source>
        <dbReference type="PROSITE-ProRule" id="PRU01182"/>
    </source>
</evidence>
<evidence type="ECO:0000305" key="2"/>
<accession>Q7NTH5</accession>
<gene>
    <name type="ordered locus">CV_3079</name>
</gene>
<keyword id="KW-0378">Hydrolase</keyword>
<keyword id="KW-0479">Metal-binding</keyword>
<keyword id="KW-0482">Metalloprotease</keyword>
<keyword id="KW-0645">Protease</keyword>
<keyword id="KW-1185">Reference proteome</keyword>
<keyword id="KW-0862">Zinc</keyword>
<proteinExistence type="inferred from homology"/>
<dbReference type="EMBL" id="AE016825">
    <property type="protein sequence ID" value="AAQ60748.1"/>
    <property type="molecule type" value="Genomic_DNA"/>
</dbReference>
<dbReference type="RefSeq" id="WP_011136626.1">
    <property type="nucleotide sequence ID" value="NC_005085.1"/>
</dbReference>
<dbReference type="SMR" id="Q7NTH5"/>
<dbReference type="STRING" id="243365.CV_3079"/>
<dbReference type="GeneID" id="66368787"/>
<dbReference type="KEGG" id="cvi:CV_3079"/>
<dbReference type="eggNOG" id="COG2003">
    <property type="taxonomic scope" value="Bacteria"/>
</dbReference>
<dbReference type="HOGENOM" id="CLU_073529_0_1_4"/>
<dbReference type="OrthoDB" id="9804482at2"/>
<dbReference type="Proteomes" id="UP000001424">
    <property type="component" value="Chromosome"/>
</dbReference>
<dbReference type="GO" id="GO:0046872">
    <property type="term" value="F:metal ion binding"/>
    <property type="evidence" value="ECO:0007669"/>
    <property type="project" value="UniProtKB-KW"/>
</dbReference>
<dbReference type="GO" id="GO:0008237">
    <property type="term" value="F:metallopeptidase activity"/>
    <property type="evidence" value="ECO:0007669"/>
    <property type="project" value="UniProtKB-KW"/>
</dbReference>
<dbReference type="GO" id="GO:0006508">
    <property type="term" value="P:proteolysis"/>
    <property type="evidence" value="ECO:0007669"/>
    <property type="project" value="UniProtKB-KW"/>
</dbReference>
<dbReference type="CDD" id="cd08071">
    <property type="entry name" value="MPN_DUF2466"/>
    <property type="match status" value="1"/>
</dbReference>
<dbReference type="Gene3D" id="1.10.150.20">
    <property type="entry name" value="5' to 3' exonuclease, C-terminal subdomain"/>
    <property type="match status" value="1"/>
</dbReference>
<dbReference type="Gene3D" id="3.40.140.10">
    <property type="entry name" value="Cytidine Deaminase, domain 2"/>
    <property type="match status" value="1"/>
</dbReference>
<dbReference type="InterPro" id="IPR037518">
    <property type="entry name" value="MPN"/>
</dbReference>
<dbReference type="InterPro" id="IPR025657">
    <property type="entry name" value="RadC_JAB"/>
</dbReference>
<dbReference type="InterPro" id="IPR010994">
    <property type="entry name" value="RuvA_2-like"/>
</dbReference>
<dbReference type="InterPro" id="IPR001405">
    <property type="entry name" value="UPF0758"/>
</dbReference>
<dbReference type="InterPro" id="IPR020891">
    <property type="entry name" value="UPF0758_CS"/>
</dbReference>
<dbReference type="InterPro" id="IPR046778">
    <property type="entry name" value="UPF0758_N"/>
</dbReference>
<dbReference type="NCBIfam" id="NF000642">
    <property type="entry name" value="PRK00024.1"/>
    <property type="match status" value="1"/>
</dbReference>
<dbReference type="NCBIfam" id="TIGR00608">
    <property type="entry name" value="radc"/>
    <property type="match status" value="1"/>
</dbReference>
<dbReference type="PANTHER" id="PTHR30471">
    <property type="entry name" value="DNA REPAIR PROTEIN RADC"/>
    <property type="match status" value="1"/>
</dbReference>
<dbReference type="PANTHER" id="PTHR30471:SF3">
    <property type="entry name" value="UPF0758 PROTEIN YEES-RELATED"/>
    <property type="match status" value="1"/>
</dbReference>
<dbReference type="Pfam" id="PF04002">
    <property type="entry name" value="RadC"/>
    <property type="match status" value="1"/>
</dbReference>
<dbReference type="Pfam" id="PF20582">
    <property type="entry name" value="UPF0758_N"/>
    <property type="match status" value="1"/>
</dbReference>
<dbReference type="SUPFAM" id="SSF47781">
    <property type="entry name" value="RuvA domain 2-like"/>
    <property type="match status" value="1"/>
</dbReference>
<dbReference type="PROSITE" id="PS50249">
    <property type="entry name" value="MPN"/>
    <property type="match status" value="1"/>
</dbReference>
<dbReference type="PROSITE" id="PS01302">
    <property type="entry name" value="UPF0758"/>
    <property type="match status" value="1"/>
</dbReference>